<dbReference type="EMBL" id="AJ537424">
    <property type="protein sequence ID" value="CAD60934.1"/>
    <property type="molecule type" value="mRNA"/>
</dbReference>
<dbReference type="EMBL" id="BC043222">
    <property type="protein sequence ID" value="AAH43222.1"/>
    <property type="molecule type" value="mRNA"/>
</dbReference>
<dbReference type="CCDS" id="CCDS34926.1"/>
<dbReference type="RefSeq" id="NP_001001557.1">
    <property type="nucleotide sequence ID" value="NM_001001557.4"/>
</dbReference>
<dbReference type="SMR" id="Q6KF10"/>
<dbReference type="BioGRID" id="134147">
    <property type="interactions" value="4"/>
</dbReference>
<dbReference type="FunCoup" id="Q6KF10">
    <property type="interactions" value="738"/>
</dbReference>
<dbReference type="IntAct" id="Q6KF10">
    <property type="interactions" value="1"/>
</dbReference>
<dbReference type="STRING" id="9606.ENSP00000287020"/>
<dbReference type="GlyCosmos" id="Q6KF10">
    <property type="glycosylation" value="1 site, No reported glycans"/>
</dbReference>
<dbReference type="GlyGen" id="Q6KF10">
    <property type="glycosylation" value="2 sites"/>
</dbReference>
<dbReference type="iPTMnet" id="Q6KF10"/>
<dbReference type="PhosphoSitePlus" id="Q6KF10"/>
<dbReference type="BioMuta" id="GDF6"/>
<dbReference type="DMDM" id="74748876"/>
<dbReference type="MassIVE" id="Q6KF10"/>
<dbReference type="PaxDb" id="9606-ENSP00000287020"/>
<dbReference type="PeptideAtlas" id="Q6KF10"/>
<dbReference type="ProteomicsDB" id="66547"/>
<dbReference type="Antibodypedia" id="25942">
    <property type="antibodies" value="163 antibodies from 29 providers"/>
</dbReference>
<dbReference type="DNASU" id="392255"/>
<dbReference type="Ensembl" id="ENST00000287020.7">
    <property type="protein sequence ID" value="ENSP00000287020.4"/>
    <property type="gene ID" value="ENSG00000156466.11"/>
</dbReference>
<dbReference type="GeneID" id="392255"/>
<dbReference type="KEGG" id="hsa:392255"/>
<dbReference type="MANE-Select" id="ENST00000287020.7">
    <property type="protein sequence ID" value="ENSP00000287020.4"/>
    <property type="RefSeq nucleotide sequence ID" value="NM_001001557.4"/>
    <property type="RefSeq protein sequence ID" value="NP_001001557.1"/>
</dbReference>
<dbReference type="UCSC" id="uc003yhp.3">
    <property type="organism name" value="human"/>
</dbReference>
<dbReference type="AGR" id="HGNC:4221"/>
<dbReference type="CTD" id="392255"/>
<dbReference type="DisGeNET" id="392255"/>
<dbReference type="GeneCards" id="GDF6"/>
<dbReference type="HGNC" id="HGNC:4221">
    <property type="gene designation" value="GDF6"/>
</dbReference>
<dbReference type="HPA" id="ENSG00000156466">
    <property type="expression patterns" value="Tissue enhanced (placenta)"/>
</dbReference>
<dbReference type="MalaCards" id="GDF6"/>
<dbReference type="MIM" id="118100">
    <property type="type" value="phenotype"/>
</dbReference>
<dbReference type="MIM" id="601147">
    <property type="type" value="gene"/>
</dbReference>
<dbReference type="MIM" id="613094">
    <property type="type" value="phenotype"/>
</dbReference>
<dbReference type="MIM" id="615360">
    <property type="type" value="phenotype"/>
</dbReference>
<dbReference type="MIM" id="617898">
    <property type="type" value="phenotype"/>
</dbReference>
<dbReference type="MIM" id="619553">
    <property type="type" value="phenotype"/>
</dbReference>
<dbReference type="neXtProt" id="NX_Q6KF10"/>
<dbReference type="OpenTargets" id="ENSG00000156466"/>
<dbReference type="Orphanet" id="98938">
    <property type="disease" value="Colobomatous microphthalmia"/>
</dbReference>
<dbReference type="Orphanet" id="2345">
    <property type="disease" value="Isolated Klippel-Feil syndrome"/>
</dbReference>
<dbReference type="Orphanet" id="65">
    <property type="disease" value="Leber congenital amaurosis"/>
</dbReference>
<dbReference type="PharmGKB" id="PA28636"/>
<dbReference type="VEuPathDB" id="HostDB:ENSG00000156466"/>
<dbReference type="eggNOG" id="KOG3900">
    <property type="taxonomic scope" value="Eukaryota"/>
</dbReference>
<dbReference type="GeneTree" id="ENSGT00940000162274"/>
<dbReference type="HOGENOM" id="CLU_020515_0_0_1"/>
<dbReference type="InParanoid" id="Q6KF10"/>
<dbReference type="OMA" id="KKSKYRC"/>
<dbReference type="OrthoDB" id="5987191at2759"/>
<dbReference type="PAN-GO" id="Q6KF10">
    <property type="GO annotations" value="4 GO annotations based on evolutionary models"/>
</dbReference>
<dbReference type="PhylomeDB" id="Q6KF10"/>
<dbReference type="TreeFam" id="TF316134"/>
<dbReference type="PathwayCommons" id="Q6KF10"/>
<dbReference type="SignaLink" id="Q6KF10"/>
<dbReference type="SIGNOR" id="Q6KF10"/>
<dbReference type="BioGRID-ORCS" id="392255">
    <property type="hits" value="14 hits in 1144 CRISPR screens"/>
</dbReference>
<dbReference type="GeneWiki" id="GDF6"/>
<dbReference type="GenomeRNAi" id="392255"/>
<dbReference type="Pharos" id="Q6KF10">
    <property type="development level" value="Tbio"/>
</dbReference>
<dbReference type="PRO" id="PR:Q6KF10"/>
<dbReference type="Proteomes" id="UP000005640">
    <property type="component" value="Chromosome 8"/>
</dbReference>
<dbReference type="RNAct" id="Q6KF10">
    <property type="molecule type" value="protein"/>
</dbReference>
<dbReference type="Bgee" id="ENSG00000156466">
    <property type="expression patterns" value="Expressed in placenta and 80 other cell types or tissues"/>
</dbReference>
<dbReference type="ExpressionAtlas" id="Q6KF10">
    <property type="expression patterns" value="baseline and differential"/>
</dbReference>
<dbReference type="GO" id="GO:0005615">
    <property type="term" value="C:extracellular space"/>
    <property type="evidence" value="ECO:0000318"/>
    <property type="project" value="GO_Central"/>
</dbReference>
<dbReference type="GO" id="GO:0005125">
    <property type="term" value="F:cytokine activity"/>
    <property type="evidence" value="ECO:0000318"/>
    <property type="project" value="GO_Central"/>
</dbReference>
<dbReference type="GO" id="GO:0008083">
    <property type="term" value="F:growth factor activity"/>
    <property type="evidence" value="ECO:0007669"/>
    <property type="project" value="UniProtKB-KW"/>
</dbReference>
<dbReference type="GO" id="GO:0042802">
    <property type="term" value="F:identical protein binding"/>
    <property type="evidence" value="ECO:0007669"/>
    <property type="project" value="Ensembl"/>
</dbReference>
<dbReference type="GO" id="GO:0032924">
    <property type="term" value="P:activin receptor signaling pathway"/>
    <property type="evidence" value="ECO:0000314"/>
    <property type="project" value="BHF-UCL"/>
</dbReference>
<dbReference type="GO" id="GO:0006915">
    <property type="term" value="P:apoptotic process"/>
    <property type="evidence" value="ECO:0000250"/>
    <property type="project" value="UniProtKB"/>
</dbReference>
<dbReference type="GO" id="GO:0030509">
    <property type="term" value="P:BMP signaling pathway"/>
    <property type="evidence" value="ECO:0000314"/>
    <property type="project" value="BHF-UCL"/>
</dbReference>
<dbReference type="GO" id="GO:0035788">
    <property type="term" value="P:cell migration involved in metanephros development"/>
    <property type="evidence" value="ECO:0007669"/>
    <property type="project" value="Ensembl"/>
</dbReference>
<dbReference type="GO" id="GO:0010631">
    <property type="term" value="P:epithelial cell migration"/>
    <property type="evidence" value="ECO:0007669"/>
    <property type="project" value="Ensembl"/>
</dbReference>
<dbReference type="GO" id="GO:0045444">
    <property type="term" value="P:fat cell differentiation"/>
    <property type="evidence" value="ECO:0000250"/>
    <property type="project" value="UniProtKB"/>
</dbReference>
<dbReference type="GO" id="GO:0001656">
    <property type="term" value="P:metanephros development"/>
    <property type="evidence" value="ECO:0000314"/>
    <property type="project" value="MGI"/>
</dbReference>
<dbReference type="GO" id="GO:0032332">
    <property type="term" value="P:positive regulation of chondrocyte differentiation"/>
    <property type="evidence" value="ECO:0000315"/>
    <property type="project" value="UniProtKB"/>
</dbReference>
<dbReference type="GO" id="GO:0045893">
    <property type="term" value="P:positive regulation of DNA-templated transcription"/>
    <property type="evidence" value="ECO:0000314"/>
    <property type="project" value="BHF-UCL"/>
</dbReference>
<dbReference type="GO" id="GO:0045666">
    <property type="term" value="P:positive regulation of neuron differentiation"/>
    <property type="evidence" value="ECO:0007669"/>
    <property type="project" value="Ensembl"/>
</dbReference>
<dbReference type="GO" id="GO:1900745">
    <property type="term" value="P:positive regulation of p38MAPK cascade"/>
    <property type="evidence" value="ECO:0000250"/>
    <property type="project" value="UniProtKB"/>
</dbReference>
<dbReference type="GO" id="GO:0060391">
    <property type="term" value="P:positive regulation of SMAD protein signal transduction"/>
    <property type="evidence" value="ECO:0000314"/>
    <property type="project" value="BHF-UCL"/>
</dbReference>
<dbReference type="GO" id="GO:1990009">
    <property type="term" value="P:retinal cell apoptotic process"/>
    <property type="evidence" value="ECO:0000250"/>
    <property type="project" value="UniProtKB"/>
</dbReference>
<dbReference type="CDD" id="cd13766">
    <property type="entry name" value="TGF_beta_GDF5_6_7"/>
    <property type="match status" value="1"/>
</dbReference>
<dbReference type="FunFam" id="2.10.90.10:FF:000001">
    <property type="entry name" value="Bone morphogenetic protein 4"/>
    <property type="match status" value="1"/>
</dbReference>
<dbReference type="FunFam" id="2.60.120.970:FF:000026">
    <property type="entry name" value="Growth differentiation factor 6"/>
    <property type="match status" value="1"/>
</dbReference>
<dbReference type="Gene3D" id="2.60.120.970">
    <property type="match status" value="1"/>
</dbReference>
<dbReference type="Gene3D" id="2.10.90.10">
    <property type="entry name" value="Cystine-knot cytokines"/>
    <property type="match status" value="1"/>
</dbReference>
<dbReference type="InterPro" id="IPR029034">
    <property type="entry name" value="Cystine-knot_cytokine"/>
</dbReference>
<dbReference type="InterPro" id="IPR001839">
    <property type="entry name" value="TGF-b_C"/>
</dbReference>
<dbReference type="InterPro" id="IPR001111">
    <property type="entry name" value="TGF-b_propeptide"/>
</dbReference>
<dbReference type="InterPro" id="IPR015615">
    <property type="entry name" value="TGF-beta-rel"/>
</dbReference>
<dbReference type="InterPro" id="IPR017948">
    <property type="entry name" value="TGFb_CS"/>
</dbReference>
<dbReference type="PANTHER" id="PTHR11848:SF43">
    <property type="entry name" value="GROWTH_DIFFERENTIATION FACTOR 6"/>
    <property type="match status" value="1"/>
</dbReference>
<dbReference type="PANTHER" id="PTHR11848">
    <property type="entry name" value="TGF-BETA FAMILY"/>
    <property type="match status" value="1"/>
</dbReference>
<dbReference type="Pfam" id="PF00019">
    <property type="entry name" value="TGF_beta"/>
    <property type="match status" value="1"/>
</dbReference>
<dbReference type="Pfam" id="PF00688">
    <property type="entry name" value="TGFb_propeptide"/>
    <property type="match status" value="1"/>
</dbReference>
<dbReference type="SMART" id="SM00204">
    <property type="entry name" value="TGFB"/>
    <property type="match status" value="1"/>
</dbReference>
<dbReference type="SUPFAM" id="SSF57501">
    <property type="entry name" value="Cystine-knot cytokines"/>
    <property type="match status" value="1"/>
</dbReference>
<dbReference type="PROSITE" id="PS00250">
    <property type="entry name" value="TGF_BETA_1"/>
    <property type="match status" value="1"/>
</dbReference>
<dbReference type="PROSITE" id="PS51362">
    <property type="entry name" value="TGF_BETA_2"/>
    <property type="match status" value="1"/>
</dbReference>
<keyword id="KW-0053">Apoptosis</keyword>
<keyword id="KW-0160">Chromosomal rearrangement</keyword>
<keyword id="KW-0165">Cleavage on pair of basic residues</keyword>
<keyword id="KW-0202">Cytokine</keyword>
<keyword id="KW-0209">Deafness</keyword>
<keyword id="KW-0217">Developmental protein</keyword>
<keyword id="KW-0225">Disease variant</keyword>
<keyword id="KW-1015">Disulfide bond</keyword>
<keyword id="KW-0242">Dwarfism</keyword>
<keyword id="KW-0325">Glycoprotein</keyword>
<keyword id="KW-0339">Growth factor</keyword>
<keyword id="KW-0901">Leber congenital amaurosis</keyword>
<keyword id="KW-1013">Microphthalmia</keyword>
<keyword id="KW-1010">Non-syndromic deafness</keyword>
<keyword id="KW-1267">Proteomics identification</keyword>
<keyword id="KW-1185">Reference proteome</keyword>
<keyword id="KW-0964">Secreted</keyword>
<keyword id="KW-0732">Signal</keyword>
<reference key="1">
    <citation type="submission" date="2003-01" db="EMBL/GenBank/DDBJ databases">
        <title>Cloning of human GDF16 and functional associated analysis.</title>
        <authorList>
            <person name="Guo J.H."/>
        </authorList>
    </citation>
    <scope>NUCLEOTIDE SEQUENCE [MRNA]</scope>
    <source>
        <tissue>Hindbrain</tissue>
    </source>
</reference>
<reference key="2">
    <citation type="journal article" date="2004" name="Genome Res.">
        <title>The status, quality, and expansion of the NIH full-length cDNA project: the Mammalian Gene Collection (MGC).</title>
        <authorList>
            <consortium name="The MGC Project Team"/>
        </authorList>
    </citation>
    <scope>NUCLEOTIDE SEQUENCE [LARGE SCALE MRNA] OF 255-455</scope>
    <source>
        <tissue>Testis</tissue>
    </source>
</reference>
<reference key="3">
    <citation type="journal article" date="2008" name="Hum. Mutat.">
        <title>Mutations in GDF6 are associated with vertebral segmentation defects in Klippel-Feil syndrome.</title>
        <authorList>
            <person name="Tassabehji M."/>
            <person name="Fang Z.M."/>
            <person name="Hilton E.N."/>
            <person name="McGaughran J."/>
            <person name="Zhao Z."/>
            <person name="de Bock C.E."/>
            <person name="Howard E."/>
            <person name="Malass M."/>
            <person name="Donnai D."/>
            <person name="Diwan A."/>
            <person name="Manson F.D.C."/>
            <person name="Murrell D."/>
            <person name="Clarke R.A."/>
        </authorList>
    </citation>
    <scope>CHROMOSOMAL REARRANGEMENT</scope>
    <scope>VARIANTS KFS1 GLU-249 AND PRO-289</scope>
</reference>
<reference key="4">
    <citation type="journal article" date="2013" name="Hum. Mol. Genet.">
        <title>Contribution of growth differentiation factor 6-dependent cell survival to early-onset retinal dystrophies.</title>
        <authorList>
            <person name="Asai-Coakwell M."/>
            <person name="March L."/>
            <person name="Dai X.H."/>
            <person name="Duval M."/>
            <person name="Lopez I."/>
            <person name="French C.R."/>
            <person name="Famulski J."/>
            <person name="De Baere E."/>
            <person name="Francis P.J."/>
            <person name="Sundaresan P."/>
            <person name="Sauve Y."/>
            <person name="Koenekoop R.K."/>
            <person name="Berry F.B."/>
            <person name="Allison W.T."/>
            <person name="Waskiewicz A.J."/>
            <person name="Lehmann O.J."/>
        </authorList>
    </citation>
    <scope>FUNCTION</scope>
    <scope>SUBCELLULAR LOCATION</scope>
    <scope>VARIANTS LCA17 HIS-57; THR-199; GLU-249 AND ASP-292</scope>
    <scope>CHARACTERIZATION OF VARIANTS LCA17 HIS-57; THR-199; GLU-249 AND ASP-292</scope>
</reference>
<reference key="5">
    <citation type="journal article" date="2020" name="J. Clin. Invest.">
        <title>Long-range cis-regulatory elements controlling GDF6 expression are essential for ear development.</title>
        <authorList>
            <person name="Bademci G."/>
            <person name="Abad C."/>
            <person name="Cengiz F.B."/>
            <person name="Seyhan S."/>
            <person name="Incesulu A."/>
            <person name="Guo S."/>
            <person name="Fitoz S."/>
            <person name="Atli E.I."/>
            <person name="Gosstola N.C."/>
            <person name="Demir S."/>
            <person name="Colbert B.M."/>
            <person name="Seyhan G.C."/>
            <person name="Sineni C.J."/>
            <person name="Duman D."/>
            <person name="Gurkan H."/>
            <person name="Morton C.C."/>
            <person name="Dykxhoorn D.M."/>
            <person name="Walz K."/>
            <person name="Tekin M."/>
        </authorList>
    </citation>
    <scope>INVOLVEMENT IN DFNB118</scope>
</reference>
<reference key="6">
    <citation type="journal article" date="2009" name="Hum. Mol. Genet.">
        <title>Incomplete penetrance and phenotypic variability characterize Gdf6-attributable oculo-skeletal phenotypes.</title>
        <authorList>
            <person name="Asai-Coakwell M."/>
            <person name="French C.R."/>
            <person name="Ye M."/>
            <person name="Garcha K."/>
            <person name="Bigot K."/>
            <person name="Perera A.G."/>
            <person name="Staehling-Hampton K."/>
            <person name="Mema S.C."/>
            <person name="Chanda B."/>
            <person name="Mushegian A."/>
            <person name="Bamforth S."/>
            <person name="Doschak M.R."/>
            <person name="Li G."/>
            <person name="Dobbs M.B."/>
            <person name="Giampietro P.F."/>
            <person name="Brooks B.P."/>
            <person name="Vijayalakshmi P."/>
            <person name="Sauve Y."/>
            <person name="Abitbol M."/>
            <person name="Sundaresan P."/>
            <person name="van Heyningen V."/>
            <person name="Pourquie O."/>
            <person name="Underhill T.M."/>
            <person name="Waskiewicz A.J."/>
            <person name="Lehmann O.J."/>
        </authorList>
    </citation>
    <scope>VARIANTS MCOP4 ARG-119; GLY-216; GLU-249; LEU-253 AND HIS-327</scope>
    <scope>VARIANTS KFS1 VAL-42 AND ARG-424</scope>
</reference>
<reference key="7">
    <citation type="journal article" date="2010" name="Hum. Mol. Genet.">
        <title>Mutation of the bone morphogenetic protein GDF3 causes ocular and skeletal anomalies.</title>
        <authorList>
            <person name="Ye M."/>
            <person name="Berry-Wynne K.M."/>
            <person name="Asai-Coakwell M."/>
            <person name="Sundaresan P."/>
            <person name="Footz T."/>
            <person name="French C.R."/>
            <person name="Abitbol M."/>
            <person name="Fleisch V.C."/>
            <person name="Corbett N."/>
            <person name="Allison W.T."/>
            <person name="Drummond G."/>
            <person name="Walter M.A."/>
            <person name="Underhill T.M."/>
            <person name="Waskiewicz A.J."/>
            <person name="Lehmann O.J."/>
        </authorList>
    </citation>
    <scope>VARIANT THR-199</scope>
</reference>
<reference key="8">
    <citation type="journal article" date="2014" name="Clin. Genet.">
        <title>Molecular findings and clinical data in a cohort of 150 patients with anophthalmia/microphthalmia.</title>
        <authorList>
            <person name="Chassaing N."/>
            <person name="Causse A."/>
            <person name="Vigouroux A."/>
            <person name="Delahaye A."/>
            <person name="Alessandri J.L."/>
            <person name="Boespflug-Tanguy O."/>
            <person name="Boute-Benejean O."/>
            <person name="Dollfus H."/>
            <person name="Duban-Bedu B."/>
            <person name="Gilbert-Dussardier B."/>
            <person name="Giuliano F."/>
            <person name="Gonzales M."/>
            <person name="Holder-Espinasse M."/>
            <person name="Isidor B."/>
            <person name="Jacquemont M.L."/>
            <person name="Lacombe D."/>
            <person name="Martin-Coignard D."/>
            <person name="Mathieu-Dramard M."/>
            <person name="Odent S."/>
            <person name="Picone O."/>
            <person name="Pinson L."/>
            <person name="Quelin C."/>
            <person name="Sigaudy S."/>
            <person name="Toutain A."/>
            <person name="Thauvin-Robinet C."/>
            <person name="Kaplan J."/>
            <person name="Calvas P."/>
        </authorList>
    </citation>
    <scope>VARIANT MCOP4 HIS-327</scope>
</reference>
<reference key="9">
    <citation type="journal article" date="2016" name="J. Bone Miner. Res.">
        <title>A New Subtype of Multiple-Synostoses Syndrome is Caused by a Mutation in GDF6 that Decreases its Sensitivity to Noggin and Enhances its Potency as a BMP Signal.</title>
        <authorList>
            <person name="Wang J."/>
            <person name="Yu T."/>
            <person name="Wang Z."/>
            <person name="Ohte S."/>
            <person name="Yao R.E."/>
            <person name="Zheng Z."/>
            <person name="Geng J."/>
            <person name="Cai H."/>
            <person name="Ge Y."/>
            <person name="Li Y."/>
            <person name="Xu Y."/>
            <person name="Zhang Q."/>
            <person name="Gusella J.F."/>
            <person name="Fu Q."/>
            <person name="Pregizer S."/>
            <person name="Rosen V."/>
            <person name="Shen Y."/>
        </authorList>
    </citation>
    <scope>INVOLVEMENT IN SYNS4</scope>
    <scope>VARIANT SYNS4 ASN-444</scope>
    <scope>CHARACTERIZATION OF VARIANT SYNS4 ASN-444</scope>
    <scope>FUNCTION</scope>
</reference>
<reference key="10">
    <citation type="journal article" date="2018" name="Am. J. Med. Genet. A">
        <title>Further delineation of the GDF6 related multiple synostoses syndrome.</title>
        <authorList>
            <person name="Terhal P.A."/>
            <person name="Verbeek N.E."/>
            <person name="Knoers N."/>
            <person name="Nievelstein R.J.A.J."/>
            <person name="van den Ouweland A."/>
            <person name="Sakkers R.J."/>
            <person name="Speleman L."/>
            <person name="van Haaften G."/>
        </authorList>
    </citation>
    <scope>VARIANT SYNS4 ARG-429</scope>
    <scope>INVOLVEMENT IN SYNS4</scope>
</reference>
<proteinExistence type="evidence at protein level"/>
<evidence type="ECO:0000250" key="1">
    <source>
        <dbReference type="UniProtKB" id="P39905"/>
    </source>
</evidence>
<evidence type="ECO:0000250" key="2">
    <source>
        <dbReference type="UniProtKB" id="P43028"/>
    </source>
</evidence>
<evidence type="ECO:0000255" key="3"/>
<evidence type="ECO:0000256" key="4">
    <source>
        <dbReference type="SAM" id="MobiDB-lite"/>
    </source>
</evidence>
<evidence type="ECO:0000269" key="5">
    <source>
    </source>
</evidence>
<evidence type="ECO:0000269" key="6">
    <source>
    </source>
</evidence>
<evidence type="ECO:0000269" key="7">
    <source>
    </source>
</evidence>
<evidence type="ECO:0000269" key="8">
    <source>
    </source>
</evidence>
<evidence type="ECO:0000269" key="9">
    <source>
    </source>
</evidence>
<evidence type="ECO:0000269" key="10">
    <source>
    </source>
</evidence>
<evidence type="ECO:0000269" key="11">
    <source>
    </source>
</evidence>
<evidence type="ECO:0000269" key="12">
    <source>
    </source>
</evidence>
<evidence type="ECO:0000305" key="13"/>
<sequence length="455" mass="50662">MDTPRVLLSAVFLISFLWDLPGFQQASISSSSSSAELGSTKGMRSRKEGKMQRAPRDSDAGREGQEPQPRPQDEPRAQQPRAQEPPGRGPRVVPHEYMLSIYRTYSIAEKLGINASFFQSSKSANTITSFVDRGLDDLSHTPLRRQKYLFDVSMLSDKEELVGAELRLFRQAPSAPWGPPAGPLHVQLFPCLSPLLLDARTLDPQGAPPAGWEVFDVWQGLRHQPWKQLCLELRAAWGELDAGEAEARARGPQQPPPPDLRSLGFGRRVRPPQERALLVVFTRSQRKNLFAEMREQLGSAEAAGPGAGAEGSWPPPSGAPDARPWLPSPGRRRRRTAFASRHGKRHGKKSRLRCSKKPLHVNFKELGWDDWIIAPLEYEAYHCEGVCDFPLRSHLEPTNHAIIQTLMNSMDPGSTPPSCCVPTKLTPISILYIDAGNNVVYKQYEDMVVESCGCR</sequence>
<accession>Q6KF10</accession>
<accession>Q6PI58</accession>
<protein>
    <recommendedName>
        <fullName>Growth/differentiation factor 6</fullName>
        <shortName>GDF-6</shortName>
    </recommendedName>
    <alternativeName>
        <fullName>Bone morphogenetic protein 13</fullName>
        <shortName>BMP-13</shortName>
    </alternativeName>
    <alternativeName>
        <fullName>Growth/differentiation factor 16</fullName>
    </alternativeName>
</protein>
<name>GDF6_HUMAN</name>
<organism>
    <name type="scientific">Homo sapiens</name>
    <name type="common">Human</name>
    <dbReference type="NCBI Taxonomy" id="9606"/>
    <lineage>
        <taxon>Eukaryota</taxon>
        <taxon>Metazoa</taxon>
        <taxon>Chordata</taxon>
        <taxon>Craniata</taxon>
        <taxon>Vertebrata</taxon>
        <taxon>Euteleostomi</taxon>
        <taxon>Mammalia</taxon>
        <taxon>Eutheria</taxon>
        <taxon>Euarchontoglires</taxon>
        <taxon>Primates</taxon>
        <taxon>Haplorrhini</taxon>
        <taxon>Catarrhini</taxon>
        <taxon>Hominidae</taxon>
        <taxon>Homo</taxon>
    </lineage>
</organism>
<feature type="signal peptide" evidence="3">
    <location>
        <begin position="1"/>
        <end position="22"/>
    </location>
</feature>
<feature type="propeptide" id="PRO_0000342206" evidence="3">
    <location>
        <begin position="23"/>
        <end position="335"/>
    </location>
</feature>
<feature type="chain" id="PRO_0000042253" description="Growth/differentiation factor 6">
    <location>
        <begin position="336"/>
        <end position="455"/>
    </location>
</feature>
<feature type="region of interest" description="Disordered" evidence="4">
    <location>
        <begin position="29"/>
        <end position="93"/>
    </location>
</feature>
<feature type="region of interest" description="Disordered" evidence="4">
    <location>
        <begin position="244"/>
        <end position="267"/>
    </location>
</feature>
<feature type="region of interest" description="Disordered" evidence="4">
    <location>
        <begin position="300"/>
        <end position="351"/>
    </location>
</feature>
<feature type="compositionally biased region" description="Basic and acidic residues" evidence="4">
    <location>
        <begin position="45"/>
        <end position="76"/>
    </location>
</feature>
<feature type="compositionally biased region" description="Low complexity" evidence="4">
    <location>
        <begin position="77"/>
        <end position="91"/>
    </location>
</feature>
<feature type="compositionally biased region" description="Basic residues" evidence="4">
    <location>
        <begin position="330"/>
        <end position="351"/>
    </location>
</feature>
<feature type="glycosylation site" description="N-linked (GlcNAc...) asparagine" evidence="3">
    <location>
        <position position="114"/>
    </location>
</feature>
<feature type="disulfide bond" evidence="1">
    <location>
        <begin position="354"/>
        <end position="420"/>
    </location>
</feature>
<feature type="disulfide bond" evidence="1">
    <location>
        <begin position="383"/>
        <end position="452"/>
    </location>
</feature>
<feature type="disulfide bond" evidence="1">
    <location>
        <begin position="387"/>
        <end position="454"/>
    </location>
</feature>
<feature type="disulfide bond" description="Interchain" evidence="1">
    <location>
        <position position="419"/>
    </location>
</feature>
<feature type="sequence variant" id="VAR_063024" description="In KFS1; dbSNP:rs121909354." evidence="6 9">
    <original>G</original>
    <variation>V</variation>
    <location>
        <position position="42"/>
    </location>
</feature>
<feature type="sequence variant" id="VAR_070254" description="In LCA17; reduced protein expression associated with decrease in growth factor activity; dbSNP:rs397514725." evidence="8">
    <original>D</original>
    <variation>H</variation>
    <location>
        <position position="57"/>
    </location>
</feature>
<feature type="sequence variant" id="VAR_023599" description="In dbSNP:rs2245091.">
    <original>K</original>
    <variation>E</variation>
    <location>
        <position position="110"/>
    </location>
</feature>
<feature type="sequence variant" id="VAR_063025" description="In MCOP4; dbSNP:rs140579014." evidence="6">
    <original>Q</original>
    <variation>R</variation>
    <location>
        <position position="119"/>
    </location>
</feature>
<feature type="sequence variant" id="VAR_065151" description="In LCA17; found also in a patient with microphthalmia isolated with coloboma type 6 carrying a mutation in GDF3; reduced protein expression associated with decrease in growth factor activity; dbSNP:rs387906794." evidence="7 8">
    <original>A</original>
    <variation>T</variation>
    <location>
        <position position="199"/>
    </location>
</feature>
<feature type="sequence variant" id="VAR_063026" description="In MCOP4; dbSNP:rs1812457627." evidence="6">
    <original>D</original>
    <variation>G</variation>
    <location>
        <position position="216"/>
    </location>
</feature>
<feature type="sequence variant" id="VAR_046903" description="In KFS1, MCOP4 and LCA17; reduced protein expression associated with decrease in growth factor activity; dbSNP:rs121909352." evidence="5 6 8">
    <original>A</original>
    <variation>E</variation>
    <location>
        <position position="249"/>
    </location>
</feature>
<feature type="sequence variant" id="VAR_063027" description="In MCOP4; dbSNP:rs121909355." evidence="6">
    <original>Q</original>
    <variation>L</variation>
    <location>
        <position position="253"/>
    </location>
</feature>
<feature type="sequence variant" id="VAR_046904" description="In KFS1; dbSNP:rs63751220." evidence="5">
    <original>L</original>
    <variation>P</variation>
    <location>
        <position position="289"/>
    </location>
</feature>
<feature type="sequence variant" id="VAR_070255" description="In LCA17; increased protein expression associated with decrease in growth factor activity; dbSNP:rs1401531865." evidence="8">
    <original>E</original>
    <variation>D</variation>
    <location>
        <position position="292"/>
    </location>
</feature>
<feature type="sequence variant" id="VAR_063028" description="In MCOP4; dbSNP:rs121909356." evidence="6">
    <original>P</original>
    <variation>H</variation>
    <location>
        <position position="327"/>
    </location>
</feature>
<feature type="sequence variant" id="VAR_063029" description="In KFS1; dbSNP:rs121909353." evidence="6">
    <original>K</original>
    <variation>R</variation>
    <location>
        <position position="424"/>
    </location>
</feature>
<feature type="sequence variant" id="VAR_080489" description="In SYNS4; uncertain significance; dbSNP:rs1554571225." evidence="11">
    <original>S</original>
    <variation>R</variation>
    <location>
        <position position="429"/>
    </location>
</feature>
<feature type="sequence variant" id="VAR_075366" description="In SYNS4; increases chondrogenic activity; increases SMAD1/5/8 signaling pathway activation; not inhibited by NOG; dbSNP:rs1554571213." evidence="10">
    <original>Y</original>
    <variation>N</variation>
    <location>
        <position position="444"/>
    </location>
</feature>
<feature type="sequence conflict" description="In Ref. 2; AAH43222." evidence="13" ref="2">
    <original>P</original>
    <variation>L</variation>
    <location>
        <position position="255"/>
    </location>
</feature>
<comment type="function">
    <text evidence="2 8 10">Growth factor that controls proliferation and cellular differentiation in the retina and bone formation. Plays a key role in regulating apoptosis during retinal development. Establishes dorsal-ventral positional information in the retina and controls the formation of the retinotectal map (PubMed:23307924). Required for normal formation of bones and joints in the limbs, skull, digits and axial skeleton. Plays a key role in establishing boundaries between skeletal elements during development. Regulation of GDF6 expression seems to be a mechanism for evolving species-specific changes in skeletal structures. Seems to positively regulate differentiation of chondrogenic tissue through the growth factor receptors subunits BMPR1A, BMPR1B, BMPR2 and ACVR2A, leading to the activation of SMAD1-SMAD5-SMAD8 complex. The regulation of chondrogenic differentiation is inhibited by NOG (PubMed:26643732). Also involved in the induction of adipogenesis from mesenchymal stem cells. This mechanism acts through the growth factor receptors subunits BMPR1A, BMPR2 and ACVR2A and the activation of SMAD1-SMAD5-SMAD8 complex and MAPK14/p38 (By similarity).</text>
</comment>
<comment type="subunit">
    <text evidence="1">Homodimer; disulfide-linked.</text>
</comment>
<comment type="interaction">
    <interactant intactId="EBI-11710019">
        <id>PRO_0000042253</id>
    </interactant>
    <interactant intactId="EBI-11700693">
        <id>P98066</id>
        <label>TNFAIP6</label>
    </interactant>
    <organismsDiffer>false</organismsDiffer>
    <experiments>3</experiments>
</comment>
<comment type="subcellular location">
    <subcellularLocation>
        <location evidence="8">Secreted</location>
    </subcellularLocation>
</comment>
<comment type="disease" evidence="5 6">
    <disease id="DI-02534">
        <name>Klippel-Feil syndrome 1, autosomal dominant</name>
        <acronym>KFS1</acronym>
        <description>A skeletal disorder characterized by congenital fusion of cervical vertebrae. It is due to a failure in the normal segmentation of vertebrae during the early weeks of fetal development. The clinical triad consists of short neck, low posterior hairline, and limited neck movement. Deafness is a feature in some cases and may be of sensorineural, conductive, or mixed type.</description>
        <dbReference type="MIM" id="118100"/>
    </disease>
    <text>The disease is caused by variants affecting the gene represented in this entry.</text>
</comment>
<comment type="disease">
    <text evidence="5">A chromosomal aberration involving GDF6 has been found in a patient with Klippel-Feil syndrome (KFS). Paracentric inv(8)(q22;2q23.3).</text>
</comment>
<comment type="disease" evidence="6 9">
    <disease id="DI-02535">
        <name>Microphthalmia, isolated, 4</name>
        <acronym>MCOP4</acronym>
        <description>A disorder of eye formation, ranging from small size of a single eye to complete bilateral absence of ocular tissues. Ocular abnormalities like opacities of the cornea and lens, scaring of the retina and choroid, and other abnormalities may also be present.</description>
        <dbReference type="MIM" id="613094"/>
    </disease>
    <text>The disease is caused by variants affecting the gene represented in this entry.</text>
</comment>
<comment type="disease" evidence="8">
    <disease id="DI-03831">
        <name>Leber congenital amaurosis 17</name>
        <acronym>LCA17</acronym>
        <description>A severe dystrophy of the retina, typically becoming evident in the first years of life. Visual function is usually poor and often accompanied by nystagmus, sluggish or almost absent pupillary responses, photophobia, high hyperopia and keratoconus.</description>
        <dbReference type="MIM" id="615360"/>
    </disease>
    <text>The disease is caused by variants affecting the gene represented in this entry.</text>
</comment>
<comment type="disease" evidence="10 11">
    <disease id="DI-05210">
        <name>Multiple synostoses syndrome 4</name>
        <acronym>SYNS4</acronym>
        <description>A bone disease characterized by multiple progressive joint fusions that commonly involve proximal interphalangeal, tarsal-carpal, humeroradial and cervical spine joints. Additional features can include progressive conductive deafness and facial dysmorphism. SYNS4 inheritance is autosomal dominant.</description>
        <dbReference type="MIM" id="617898"/>
    </disease>
    <text>The disease is caused by variants affecting the gene represented in this entry.</text>
</comment>
<comment type="disease" evidence="12">
    <disease id="DI-06233">
        <name>Deafness, autosomal recessive, 118, with cochlear aplasia</name>
        <acronym>DFNB118</acronym>
        <description>A form of non-syndromic deafness characterized by congenital profound sensorineural hearing loss and cochlear aplasia. Sensorineural hearing loss results from damage to the neural receptors of the inner ear, the nerve pathways to the brain, or the area of the brain that receives sound information.</description>
        <dbReference type="MIM" id="619553"/>
    </disease>
    <text evidence="12">The gene represented in this entry is involved in disease pathogenesis. Homozygous deletions on chromosome 8 removing putative enhancers of GDF6, segregate with the disease in families with congenital deafness and cochlear aplasia.</text>
</comment>
<comment type="similarity">
    <text evidence="13">Belongs to the TGF-beta family.</text>
</comment>
<gene>
    <name type="primary">GDF6</name>
    <name type="synonym">BMP13</name>
    <name type="synonym">GDF16</name>
</gene>